<evidence type="ECO:0000250" key="1">
    <source>
        <dbReference type="UniProtKB" id="Q96JP0"/>
    </source>
</evidence>
<evidence type="ECO:0000305" key="2"/>
<sequence length="618" mass="68479">MDLKTAVFNAARDGKLKLLQKLLENKSDREVLKLMAEKTNGATPLLMASRYGHLELVEFLMECCCAPVELGGSVNFDGEVIEGAPPLWAASAAGHLKVVQSLLGHGASVNNTTLTNSTPLRAACFDGHLDIVRYLVEHQADLEVANRHGHTCLMISCYKGHREIAQFLLEKGADVNRRSVKGNTALHDCAESGSLEIMKMLLKFGASMEKDGYGMTPLLSASVTGHTNIVDFLTAHPQTGLAERISALELLGATFVDKKRDLLGALQYWKRAMELRHSEADCMRREEPLEPEPAYDCSREVSTAEELDGLIADPDDMRMQALLIRERILGPAHPDTSYYIRYRGAVYADSGNFERCIRLWKYALDMQQSNLEPLSPMTASSLLSFAELFSFMLQDRAKGLLGAGVSFQQLMEILCRSVLEIERAVKQPRPSPDPDPAQLSKLLSIILHLICLLEKLPCSPEQDQHKKETIYRFLKLQACGRNGFSPLHLAVDHNTTCVGRYPVCKFPSLQVASVLLECGADVNSRDLDDNSPLHVAASNNHPDIMKLLISGGTHFDSTNALQQTACDLLDHTQLAKSLIQPINHTTLQCLAARAIIRHRLVYRGSIPERLEAFVLLHR</sequence>
<feature type="chain" id="PRO_0000324538" description="Protein fem-1 homolog C">
    <location>
        <begin position="1"/>
        <end position="618"/>
    </location>
</feature>
<feature type="repeat" description="ANK 1">
    <location>
        <begin position="2"/>
        <end position="31"/>
    </location>
</feature>
<feature type="repeat" description="ANK 2">
    <location>
        <begin position="40"/>
        <end position="70"/>
    </location>
</feature>
<feature type="repeat" description="ANK 3">
    <location>
        <begin position="82"/>
        <end position="111"/>
    </location>
</feature>
<feature type="repeat" description="ANK 4">
    <location>
        <begin position="115"/>
        <end position="144"/>
    </location>
</feature>
<feature type="repeat" description="ANK 5">
    <location>
        <begin position="148"/>
        <end position="177"/>
    </location>
</feature>
<feature type="repeat" description="ANK 6">
    <location>
        <begin position="181"/>
        <end position="210"/>
    </location>
</feature>
<feature type="repeat" description="ANK 7">
    <location>
        <begin position="213"/>
        <end position="243"/>
    </location>
</feature>
<feature type="repeat" description="TPR 1">
    <location>
        <begin position="245"/>
        <end position="279"/>
    </location>
</feature>
<feature type="repeat" description="TPR 2">
    <location>
        <begin position="337"/>
        <end position="370"/>
    </location>
</feature>
<feature type="repeat" description="ANK 8">
    <location>
        <begin position="482"/>
        <end position="524"/>
    </location>
</feature>
<feature type="repeat" description="ANK 9">
    <location>
        <begin position="528"/>
        <end position="557"/>
    </location>
</feature>
<feature type="sequence conflict" description="In Ref. 1; AAO64431." evidence="2" ref="1">
    <original>V</original>
    <variation>M</variation>
    <location>
        <position position="418"/>
    </location>
</feature>
<feature type="sequence conflict" description="In Ref. 1; AAO64431." evidence="2" ref="1">
    <original>H</original>
    <variation>R</variation>
    <location>
        <position position="493"/>
    </location>
</feature>
<keyword id="KW-0040">ANK repeat</keyword>
<keyword id="KW-1185">Reference proteome</keyword>
<keyword id="KW-0677">Repeat</keyword>
<keyword id="KW-0802">TPR repeat</keyword>
<keyword id="KW-0833">Ubl conjugation pathway</keyword>
<accession>Q7T3P8</accession>
<accession>Q6PGZ5</accession>
<proteinExistence type="evidence at transcript level"/>
<protein>
    <recommendedName>
        <fullName evidence="2">Protein fem-1 homolog C</fullName>
        <shortName evidence="1">FEM1c</shortName>
    </recommendedName>
    <alternativeName>
        <fullName>FEM1-gamma</fullName>
    </alternativeName>
</protein>
<dbReference type="EMBL" id="AY249190">
    <property type="protein sequence ID" value="AAO64431.1"/>
    <property type="molecule type" value="mRNA"/>
</dbReference>
<dbReference type="EMBL" id="BC056774">
    <property type="protein sequence ID" value="AAH56774.1"/>
    <property type="molecule type" value="mRNA"/>
</dbReference>
<dbReference type="RefSeq" id="NP_937788.2">
    <property type="nucleotide sequence ID" value="NM_198145.2"/>
</dbReference>
<dbReference type="SMR" id="Q7T3P8"/>
<dbReference type="FunCoup" id="Q7T3P8">
    <property type="interactions" value="1217"/>
</dbReference>
<dbReference type="STRING" id="7955.ENSDARP00000140150"/>
<dbReference type="PaxDb" id="7955-ENSDARP00000007949"/>
<dbReference type="GeneID" id="378965"/>
<dbReference type="KEGG" id="dre:378965"/>
<dbReference type="AGR" id="ZFIN:ZDB-GENE-031008-3"/>
<dbReference type="CTD" id="56929"/>
<dbReference type="ZFIN" id="ZDB-GENE-031008-3">
    <property type="gene designation" value="fem1c"/>
</dbReference>
<dbReference type="eggNOG" id="KOG0508">
    <property type="taxonomic scope" value="Eukaryota"/>
</dbReference>
<dbReference type="InParanoid" id="Q7T3P8"/>
<dbReference type="OrthoDB" id="4429489at2759"/>
<dbReference type="PhylomeDB" id="Q7T3P8"/>
<dbReference type="Reactome" id="R-DRE-8951664">
    <property type="pathway name" value="Neddylation"/>
</dbReference>
<dbReference type="UniPathway" id="UPA00143"/>
<dbReference type="PRO" id="PR:Q7T3P8"/>
<dbReference type="Proteomes" id="UP000000437">
    <property type="component" value="Chromosome 8"/>
</dbReference>
<dbReference type="GO" id="GO:0031462">
    <property type="term" value="C:Cul2-RING ubiquitin ligase complex"/>
    <property type="evidence" value="ECO:0000250"/>
    <property type="project" value="UniProtKB"/>
</dbReference>
<dbReference type="GO" id="GO:0000151">
    <property type="term" value="C:ubiquitin ligase complex"/>
    <property type="evidence" value="ECO:0000318"/>
    <property type="project" value="GO_Central"/>
</dbReference>
<dbReference type="GO" id="GO:1990756">
    <property type="term" value="F:ubiquitin-like ligase-substrate adaptor activity"/>
    <property type="evidence" value="ECO:0000250"/>
    <property type="project" value="UniProtKB"/>
</dbReference>
<dbReference type="GO" id="GO:0043161">
    <property type="term" value="P:proteasome-mediated ubiquitin-dependent protein catabolic process"/>
    <property type="evidence" value="ECO:0000250"/>
    <property type="project" value="UniProtKB"/>
</dbReference>
<dbReference type="GO" id="GO:0016567">
    <property type="term" value="P:protein ubiquitination"/>
    <property type="evidence" value="ECO:0007669"/>
    <property type="project" value="UniProtKB-UniPathway"/>
</dbReference>
<dbReference type="GO" id="GO:0140627">
    <property type="term" value="P:ubiquitin-dependent protein catabolic process via the C-end degron rule pathway"/>
    <property type="evidence" value="ECO:0000250"/>
    <property type="project" value="UniProtKB"/>
</dbReference>
<dbReference type="FunFam" id="1.25.40.10:FF:000104">
    <property type="entry name" value="Fem-1 homolog c (C.elegans)"/>
    <property type="match status" value="1"/>
</dbReference>
<dbReference type="FunFam" id="1.25.40.20:FF:000163">
    <property type="entry name" value="Fem-1 homolog c (C.elegans)"/>
    <property type="match status" value="1"/>
</dbReference>
<dbReference type="Gene3D" id="1.25.40.20">
    <property type="entry name" value="Ankyrin repeat-containing domain"/>
    <property type="match status" value="3"/>
</dbReference>
<dbReference type="Gene3D" id="1.25.40.10">
    <property type="entry name" value="Tetratricopeptide repeat domain"/>
    <property type="match status" value="1"/>
</dbReference>
<dbReference type="InterPro" id="IPR002110">
    <property type="entry name" value="Ankyrin_rpt"/>
</dbReference>
<dbReference type="InterPro" id="IPR036770">
    <property type="entry name" value="Ankyrin_rpt-contain_sf"/>
</dbReference>
<dbReference type="InterPro" id="IPR011990">
    <property type="entry name" value="TPR-like_helical_dom_sf"/>
</dbReference>
<dbReference type="PANTHER" id="PTHR24173">
    <property type="entry name" value="ANKYRIN REPEAT CONTAINING"/>
    <property type="match status" value="1"/>
</dbReference>
<dbReference type="PANTHER" id="PTHR24173:SF74">
    <property type="entry name" value="ANKYRIN REPEAT DOMAIN-CONTAINING PROTEIN 16"/>
    <property type="match status" value="1"/>
</dbReference>
<dbReference type="Pfam" id="PF12796">
    <property type="entry name" value="Ank_2"/>
    <property type="match status" value="3"/>
</dbReference>
<dbReference type="Pfam" id="PF13637">
    <property type="entry name" value="Ank_4"/>
    <property type="match status" value="1"/>
</dbReference>
<dbReference type="PRINTS" id="PR01415">
    <property type="entry name" value="ANKYRIN"/>
</dbReference>
<dbReference type="SMART" id="SM00248">
    <property type="entry name" value="ANK"/>
    <property type="match status" value="9"/>
</dbReference>
<dbReference type="SUPFAM" id="SSF48403">
    <property type="entry name" value="Ankyrin repeat"/>
    <property type="match status" value="2"/>
</dbReference>
<dbReference type="PROSITE" id="PS50297">
    <property type="entry name" value="ANK_REP_REGION"/>
    <property type="match status" value="2"/>
</dbReference>
<dbReference type="PROSITE" id="PS50088">
    <property type="entry name" value="ANK_REPEAT"/>
    <property type="match status" value="7"/>
</dbReference>
<comment type="function">
    <text evidence="1">Substrate-recognition component of a Cul2-RING (CRL2) E3 ubiquitin-protein ligase complex of the DesCEND (destruction via C-end degrons) pathway, which recognizes a C-degron located at the extreme C terminus of target proteins, leading to their ubiquitination and degradation. The C-degron recognized by the DesCEND pathway is usually a motif of less than ten residues and can be present in full-length proteins, truncated proteins or proteolytically cleaved forms. The CRL2(FEM1C) complex specifically recognizes proteins with an arginine at the C-terminus: recognizes and binds proteins ending with -Lys/Arg-Xaa-Arg and -Lys/Arg-Xaa-Xaa-Arg C-degrons, leading to their ubiquitination and degradation.</text>
</comment>
<comment type="pathway">
    <text evidence="1">Protein modification; protein ubiquitination.</text>
</comment>
<comment type="subunit">
    <text evidence="1">Component of a CRL2 E3 ubiquitin-protein ligase complex, also named ECS (Elongin BC-CUL2/5-SOCS-box protein) complex.</text>
</comment>
<comment type="domain">
    <text evidence="1">The first seven ANK repeats at the N-terminus (1-243) are essnetial for recognition of Lys/Arg-Xaa-Arg and -Lys/Arg-Xaa-Xaa-Arg C-degrons.</text>
</comment>
<comment type="similarity">
    <text evidence="2">Belongs to the fem-1 family.</text>
</comment>
<organism>
    <name type="scientific">Danio rerio</name>
    <name type="common">Zebrafish</name>
    <name type="synonym">Brachydanio rerio</name>
    <dbReference type="NCBI Taxonomy" id="7955"/>
    <lineage>
        <taxon>Eukaryota</taxon>
        <taxon>Metazoa</taxon>
        <taxon>Chordata</taxon>
        <taxon>Craniata</taxon>
        <taxon>Vertebrata</taxon>
        <taxon>Euteleostomi</taxon>
        <taxon>Actinopterygii</taxon>
        <taxon>Neopterygii</taxon>
        <taxon>Teleostei</taxon>
        <taxon>Ostariophysi</taxon>
        <taxon>Cypriniformes</taxon>
        <taxon>Danionidae</taxon>
        <taxon>Danioninae</taxon>
        <taxon>Danio</taxon>
    </lineage>
</organism>
<reference key="1">
    <citation type="journal article" date="2003" name="Gene">
        <title>The Fem1c genes: conserved members of the Fem1 gene family in vertebrates.</title>
        <authorList>
            <person name="Ventura-Holman T."/>
            <person name="Lu D."/>
            <person name="Si X."/>
            <person name="Izevbigie E.B."/>
            <person name="Maher J.F."/>
        </authorList>
    </citation>
    <scope>NUCLEOTIDE SEQUENCE [MRNA]</scope>
</reference>
<reference key="2">
    <citation type="submission" date="2003-08" db="EMBL/GenBank/DDBJ databases">
        <authorList>
            <consortium name="NIH - Zebrafish Gene Collection (ZGC) project"/>
        </authorList>
    </citation>
    <scope>NUCLEOTIDE SEQUENCE [LARGE SCALE MRNA]</scope>
    <source>
        <strain>AB</strain>
    </source>
</reference>
<name>FEM1C_DANRE</name>
<gene>
    <name evidence="1" type="primary">fem1c</name>
</gene>